<feature type="chain" id="PRO_0000152307" description="Sugar fermentation stimulation protein homolog">
    <location>
        <begin position="1"/>
        <end position="230"/>
    </location>
</feature>
<evidence type="ECO:0000255" key="1">
    <source>
        <dbReference type="HAMAP-Rule" id="MF_00095"/>
    </source>
</evidence>
<accession>Q5LM03</accession>
<protein>
    <recommendedName>
        <fullName evidence="1">Sugar fermentation stimulation protein homolog</fullName>
    </recommendedName>
</protein>
<comment type="similarity">
    <text evidence="1">Belongs to the SfsA family.</text>
</comment>
<gene>
    <name evidence="1" type="primary">sfsA</name>
    <name type="ordered locus">SPO3760</name>
</gene>
<organism>
    <name type="scientific">Ruegeria pomeroyi (strain ATCC 700808 / DSM 15171 / DSS-3)</name>
    <name type="common">Silicibacter pomeroyi</name>
    <dbReference type="NCBI Taxonomy" id="246200"/>
    <lineage>
        <taxon>Bacteria</taxon>
        <taxon>Pseudomonadati</taxon>
        <taxon>Pseudomonadota</taxon>
        <taxon>Alphaproteobacteria</taxon>
        <taxon>Rhodobacterales</taxon>
        <taxon>Roseobacteraceae</taxon>
        <taxon>Ruegeria</taxon>
    </lineage>
</organism>
<proteinExistence type="inferred from homology"/>
<keyword id="KW-1185">Reference proteome</keyword>
<name>SFSA_RUEPO</name>
<sequence>MRFQTTLVPARLIRRYKRFLADCQLEDGREVTAHCANPGSMMGLADPGTKIWLEPNDDPKKKLKFGWRLVDHENGHFTGVDTSVPNRALKTALERRAIPSLAAYETVRPEVKYGQNSRIDFLLSGPGLADAYVEVKSVTLCREPGLAEFPDSVTARGAKHLAELAAMAGLGHRAIMLYLVQRTDCDRFTLAADIDPAYARAFETARAQGVEKLILTTHISPQGVEIADML</sequence>
<reference key="1">
    <citation type="journal article" date="2004" name="Nature">
        <title>Genome sequence of Silicibacter pomeroyi reveals adaptations to the marine environment.</title>
        <authorList>
            <person name="Moran M.A."/>
            <person name="Buchan A."/>
            <person name="Gonzalez J.M."/>
            <person name="Heidelberg J.F."/>
            <person name="Whitman W.B."/>
            <person name="Kiene R.P."/>
            <person name="Henriksen J.R."/>
            <person name="King G.M."/>
            <person name="Belas R."/>
            <person name="Fuqua C."/>
            <person name="Brinkac L.M."/>
            <person name="Lewis M."/>
            <person name="Johri S."/>
            <person name="Weaver B."/>
            <person name="Pai G."/>
            <person name="Eisen J.A."/>
            <person name="Rahe E."/>
            <person name="Sheldon W.M."/>
            <person name="Ye W."/>
            <person name="Miller T.R."/>
            <person name="Carlton J."/>
            <person name="Rasko D.A."/>
            <person name="Paulsen I.T."/>
            <person name="Ren Q."/>
            <person name="Daugherty S.C."/>
            <person name="DeBoy R.T."/>
            <person name="Dodson R.J."/>
            <person name="Durkin A.S."/>
            <person name="Madupu R."/>
            <person name="Nelson W.C."/>
            <person name="Sullivan S.A."/>
            <person name="Rosovitz M.J."/>
            <person name="Haft D.H."/>
            <person name="Selengut J."/>
            <person name="Ward N."/>
        </authorList>
    </citation>
    <scope>NUCLEOTIDE SEQUENCE [LARGE SCALE GENOMIC DNA]</scope>
    <source>
        <strain>ATCC 700808 / DSM 15171 / DSS-3</strain>
    </source>
</reference>
<reference key="2">
    <citation type="journal article" date="2014" name="Stand. Genomic Sci.">
        <title>An updated genome annotation for the model marine bacterium Ruegeria pomeroyi DSS-3.</title>
        <authorList>
            <person name="Rivers A.R."/>
            <person name="Smith C.B."/>
            <person name="Moran M.A."/>
        </authorList>
    </citation>
    <scope>GENOME REANNOTATION</scope>
    <source>
        <strain>ATCC 700808 / DSM 15171 / DSS-3</strain>
    </source>
</reference>
<dbReference type="EMBL" id="CP000031">
    <property type="protein sequence ID" value="AAV96981.1"/>
    <property type="molecule type" value="Genomic_DNA"/>
</dbReference>
<dbReference type="RefSeq" id="WP_011049439.1">
    <property type="nucleotide sequence ID" value="NC_003911.12"/>
</dbReference>
<dbReference type="SMR" id="Q5LM03"/>
<dbReference type="STRING" id="246200.SPO3760"/>
<dbReference type="PaxDb" id="246200-SPO3760"/>
<dbReference type="DNASU" id="3194105"/>
<dbReference type="KEGG" id="sil:SPO3760"/>
<dbReference type="eggNOG" id="COG1489">
    <property type="taxonomic scope" value="Bacteria"/>
</dbReference>
<dbReference type="HOGENOM" id="CLU_052299_2_0_5"/>
<dbReference type="OrthoDB" id="9802365at2"/>
<dbReference type="Proteomes" id="UP000001023">
    <property type="component" value="Chromosome"/>
</dbReference>
<dbReference type="GO" id="GO:0003677">
    <property type="term" value="F:DNA binding"/>
    <property type="evidence" value="ECO:0007669"/>
    <property type="project" value="InterPro"/>
</dbReference>
<dbReference type="CDD" id="cd22359">
    <property type="entry name" value="SfsA-like_bacterial"/>
    <property type="match status" value="1"/>
</dbReference>
<dbReference type="Gene3D" id="2.40.50.580">
    <property type="match status" value="1"/>
</dbReference>
<dbReference type="Gene3D" id="3.40.1350.60">
    <property type="match status" value="1"/>
</dbReference>
<dbReference type="HAMAP" id="MF_00095">
    <property type="entry name" value="SfsA"/>
    <property type="match status" value="1"/>
</dbReference>
<dbReference type="InterPro" id="IPR005224">
    <property type="entry name" value="SfsA"/>
</dbReference>
<dbReference type="InterPro" id="IPR040452">
    <property type="entry name" value="SfsA_C"/>
</dbReference>
<dbReference type="InterPro" id="IPR041465">
    <property type="entry name" value="SfsA_N"/>
</dbReference>
<dbReference type="NCBIfam" id="TIGR00230">
    <property type="entry name" value="sfsA"/>
    <property type="match status" value="1"/>
</dbReference>
<dbReference type="PANTHER" id="PTHR30545">
    <property type="entry name" value="SUGAR FERMENTATION STIMULATION PROTEIN A"/>
    <property type="match status" value="1"/>
</dbReference>
<dbReference type="PANTHER" id="PTHR30545:SF2">
    <property type="entry name" value="SUGAR FERMENTATION STIMULATION PROTEIN A"/>
    <property type="match status" value="1"/>
</dbReference>
<dbReference type="Pfam" id="PF03749">
    <property type="entry name" value="SfsA"/>
    <property type="match status" value="1"/>
</dbReference>
<dbReference type="Pfam" id="PF17746">
    <property type="entry name" value="SfsA_N"/>
    <property type="match status" value="1"/>
</dbReference>